<organism>
    <name type="scientific">Salmonella agona (strain SL483)</name>
    <dbReference type="NCBI Taxonomy" id="454166"/>
    <lineage>
        <taxon>Bacteria</taxon>
        <taxon>Pseudomonadati</taxon>
        <taxon>Pseudomonadota</taxon>
        <taxon>Gammaproteobacteria</taxon>
        <taxon>Enterobacterales</taxon>
        <taxon>Enterobacteriaceae</taxon>
        <taxon>Salmonella</taxon>
    </lineage>
</organism>
<gene>
    <name evidence="1" type="primary">argG</name>
    <name type="ordered locus">SeAg_B3479</name>
</gene>
<dbReference type="EC" id="6.3.4.5" evidence="1"/>
<dbReference type="EMBL" id="CP001138">
    <property type="protein sequence ID" value="ACH49169.1"/>
    <property type="molecule type" value="Genomic_DNA"/>
</dbReference>
<dbReference type="RefSeq" id="WP_000207646.1">
    <property type="nucleotide sequence ID" value="NC_011149.1"/>
</dbReference>
<dbReference type="SMR" id="B5F6U1"/>
<dbReference type="KEGG" id="sea:SeAg_B3479"/>
<dbReference type="HOGENOM" id="CLU_032784_4_1_6"/>
<dbReference type="UniPathway" id="UPA00068">
    <property type="reaction ID" value="UER00113"/>
</dbReference>
<dbReference type="Proteomes" id="UP000008819">
    <property type="component" value="Chromosome"/>
</dbReference>
<dbReference type="GO" id="GO:0005737">
    <property type="term" value="C:cytoplasm"/>
    <property type="evidence" value="ECO:0007669"/>
    <property type="project" value="UniProtKB-SubCell"/>
</dbReference>
<dbReference type="GO" id="GO:0004055">
    <property type="term" value="F:argininosuccinate synthase activity"/>
    <property type="evidence" value="ECO:0007669"/>
    <property type="project" value="UniProtKB-UniRule"/>
</dbReference>
<dbReference type="GO" id="GO:0005524">
    <property type="term" value="F:ATP binding"/>
    <property type="evidence" value="ECO:0007669"/>
    <property type="project" value="UniProtKB-UniRule"/>
</dbReference>
<dbReference type="GO" id="GO:0042803">
    <property type="term" value="F:protein homodimerization activity"/>
    <property type="evidence" value="ECO:0007669"/>
    <property type="project" value="InterPro"/>
</dbReference>
<dbReference type="GO" id="GO:0000053">
    <property type="term" value="P:argininosuccinate metabolic process"/>
    <property type="evidence" value="ECO:0007669"/>
    <property type="project" value="TreeGrafter"/>
</dbReference>
<dbReference type="GO" id="GO:0006526">
    <property type="term" value="P:L-arginine biosynthetic process"/>
    <property type="evidence" value="ECO:0007669"/>
    <property type="project" value="UniProtKB-UniRule"/>
</dbReference>
<dbReference type="GO" id="GO:0000050">
    <property type="term" value="P:urea cycle"/>
    <property type="evidence" value="ECO:0007669"/>
    <property type="project" value="TreeGrafter"/>
</dbReference>
<dbReference type="CDD" id="cd01999">
    <property type="entry name" value="ASS"/>
    <property type="match status" value="1"/>
</dbReference>
<dbReference type="FunFam" id="1.10.287.400:FF:000001">
    <property type="entry name" value="Argininosuccinate synthase"/>
    <property type="match status" value="1"/>
</dbReference>
<dbReference type="Gene3D" id="1.10.287.400">
    <property type="match status" value="1"/>
</dbReference>
<dbReference type="Gene3D" id="3.90.1260.10">
    <property type="entry name" value="Argininosuccinate synthetase, chain A, domain 2"/>
    <property type="match status" value="1"/>
</dbReference>
<dbReference type="Gene3D" id="3.40.50.620">
    <property type="entry name" value="HUPs"/>
    <property type="match status" value="1"/>
</dbReference>
<dbReference type="HAMAP" id="MF_00581">
    <property type="entry name" value="Arg_succ_synth_type2"/>
    <property type="match status" value="1"/>
</dbReference>
<dbReference type="InterPro" id="IPR023437">
    <property type="entry name" value="Arg_succ_synth_type2_subfam"/>
</dbReference>
<dbReference type="InterPro" id="IPR048268">
    <property type="entry name" value="Arginosuc_syn_C"/>
</dbReference>
<dbReference type="InterPro" id="IPR048267">
    <property type="entry name" value="Arginosuc_syn_N"/>
</dbReference>
<dbReference type="InterPro" id="IPR001518">
    <property type="entry name" value="Arginosuc_synth"/>
</dbReference>
<dbReference type="InterPro" id="IPR018223">
    <property type="entry name" value="Arginosuc_synth_CS"/>
</dbReference>
<dbReference type="InterPro" id="IPR023434">
    <property type="entry name" value="Arginosuc_synth_type_1_subfam"/>
</dbReference>
<dbReference type="InterPro" id="IPR024074">
    <property type="entry name" value="AS_cat/multimer_dom_body"/>
</dbReference>
<dbReference type="InterPro" id="IPR024073">
    <property type="entry name" value="AS_multimer_C_tail"/>
</dbReference>
<dbReference type="InterPro" id="IPR014729">
    <property type="entry name" value="Rossmann-like_a/b/a_fold"/>
</dbReference>
<dbReference type="NCBIfam" id="TIGR00032">
    <property type="entry name" value="argG"/>
    <property type="match status" value="1"/>
</dbReference>
<dbReference type="NCBIfam" id="NF003779">
    <property type="entry name" value="PRK05370.1"/>
    <property type="match status" value="1"/>
</dbReference>
<dbReference type="PANTHER" id="PTHR11587">
    <property type="entry name" value="ARGININOSUCCINATE SYNTHASE"/>
    <property type="match status" value="1"/>
</dbReference>
<dbReference type="PANTHER" id="PTHR11587:SF2">
    <property type="entry name" value="ARGININOSUCCINATE SYNTHASE"/>
    <property type="match status" value="1"/>
</dbReference>
<dbReference type="Pfam" id="PF20979">
    <property type="entry name" value="Arginosuc_syn_C"/>
    <property type="match status" value="1"/>
</dbReference>
<dbReference type="Pfam" id="PF00764">
    <property type="entry name" value="Arginosuc_synth"/>
    <property type="match status" value="1"/>
</dbReference>
<dbReference type="SUPFAM" id="SSF52402">
    <property type="entry name" value="Adenine nucleotide alpha hydrolases-like"/>
    <property type="match status" value="1"/>
</dbReference>
<dbReference type="SUPFAM" id="SSF69864">
    <property type="entry name" value="Argininosuccinate synthetase, C-terminal domain"/>
    <property type="match status" value="1"/>
</dbReference>
<dbReference type="PROSITE" id="PS00564">
    <property type="entry name" value="ARGININOSUCCIN_SYN_1"/>
    <property type="match status" value="1"/>
</dbReference>
<dbReference type="PROSITE" id="PS00565">
    <property type="entry name" value="ARGININOSUCCIN_SYN_2"/>
    <property type="match status" value="1"/>
</dbReference>
<evidence type="ECO:0000255" key="1">
    <source>
        <dbReference type="HAMAP-Rule" id="MF_00581"/>
    </source>
</evidence>
<accession>B5F6U1</accession>
<reference key="1">
    <citation type="journal article" date="2011" name="J. Bacteriol.">
        <title>Comparative genomics of 28 Salmonella enterica isolates: evidence for CRISPR-mediated adaptive sublineage evolution.</title>
        <authorList>
            <person name="Fricke W.F."/>
            <person name="Mammel M.K."/>
            <person name="McDermott P.F."/>
            <person name="Tartera C."/>
            <person name="White D.G."/>
            <person name="Leclerc J.E."/>
            <person name="Ravel J."/>
            <person name="Cebula T.A."/>
        </authorList>
    </citation>
    <scope>NUCLEOTIDE SEQUENCE [LARGE SCALE GENOMIC DNA]</scope>
    <source>
        <strain>SL483</strain>
    </source>
</reference>
<protein>
    <recommendedName>
        <fullName evidence="1">Argininosuccinate synthase</fullName>
        <ecNumber evidence="1">6.3.4.5</ecNumber>
    </recommendedName>
    <alternativeName>
        <fullName evidence="1">Citrulline--aspartate ligase</fullName>
    </alternativeName>
</protein>
<feature type="chain" id="PRO_1000129763" description="Argininosuccinate synthase">
    <location>
        <begin position="1"/>
        <end position="447"/>
    </location>
</feature>
<feature type="binding site" evidence="1">
    <location>
        <begin position="17"/>
        <end position="25"/>
    </location>
    <ligand>
        <name>ATP</name>
        <dbReference type="ChEBI" id="CHEBI:30616"/>
    </ligand>
</feature>
<feature type="binding site" evidence="1">
    <location>
        <position position="43"/>
    </location>
    <ligand>
        <name>ATP</name>
        <dbReference type="ChEBI" id="CHEBI:30616"/>
    </ligand>
</feature>
<feature type="binding site" evidence="1">
    <location>
        <position position="99"/>
    </location>
    <ligand>
        <name>L-citrulline</name>
        <dbReference type="ChEBI" id="CHEBI:57743"/>
    </ligand>
</feature>
<feature type="binding site" evidence="1">
    <location>
        <position position="129"/>
    </location>
    <ligand>
        <name>ATP</name>
        <dbReference type="ChEBI" id="CHEBI:30616"/>
    </ligand>
</feature>
<feature type="binding site" evidence="1">
    <location>
        <position position="131"/>
    </location>
    <ligand>
        <name>ATP</name>
        <dbReference type="ChEBI" id="CHEBI:30616"/>
    </ligand>
</feature>
<feature type="binding site" evidence="1">
    <location>
        <position position="131"/>
    </location>
    <ligand>
        <name>L-aspartate</name>
        <dbReference type="ChEBI" id="CHEBI:29991"/>
    </ligand>
</feature>
<feature type="binding site" evidence="1">
    <location>
        <position position="135"/>
    </location>
    <ligand>
        <name>L-aspartate</name>
        <dbReference type="ChEBI" id="CHEBI:29991"/>
    </ligand>
</feature>
<feature type="binding site" evidence="1">
    <location>
        <position position="135"/>
    </location>
    <ligand>
        <name>L-citrulline</name>
        <dbReference type="ChEBI" id="CHEBI:57743"/>
    </ligand>
</feature>
<feature type="binding site" evidence="1">
    <location>
        <position position="136"/>
    </location>
    <ligand>
        <name>ATP</name>
        <dbReference type="ChEBI" id="CHEBI:30616"/>
    </ligand>
</feature>
<feature type="binding site" evidence="1">
    <location>
        <position position="136"/>
    </location>
    <ligand>
        <name>L-aspartate</name>
        <dbReference type="ChEBI" id="CHEBI:29991"/>
    </ligand>
</feature>
<feature type="binding site" evidence="1">
    <location>
        <position position="139"/>
    </location>
    <ligand>
        <name>L-citrulline</name>
        <dbReference type="ChEBI" id="CHEBI:57743"/>
    </ligand>
</feature>
<feature type="binding site" evidence="1">
    <location>
        <position position="192"/>
    </location>
    <ligand>
        <name>L-citrulline</name>
        <dbReference type="ChEBI" id="CHEBI:57743"/>
    </ligand>
</feature>
<feature type="binding site" evidence="1">
    <location>
        <position position="194"/>
    </location>
    <ligand>
        <name>ATP</name>
        <dbReference type="ChEBI" id="CHEBI:30616"/>
    </ligand>
</feature>
<feature type="binding site" evidence="1">
    <location>
        <position position="201"/>
    </location>
    <ligand>
        <name>L-citrulline</name>
        <dbReference type="ChEBI" id="CHEBI:57743"/>
    </ligand>
</feature>
<feature type="binding site" evidence="1">
    <location>
        <position position="203"/>
    </location>
    <ligand>
        <name>L-citrulline</name>
        <dbReference type="ChEBI" id="CHEBI:57743"/>
    </ligand>
</feature>
<feature type="binding site" evidence="1">
    <location>
        <position position="280"/>
    </location>
    <ligand>
        <name>L-citrulline</name>
        <dbReference type="ChEBI" id="CHEBI:57743"/>
    </ligand>
</feature>
<comment type="catalytic activity">
    <reaction evidence="1">
        <text>L-citrulline + L-aspartate + ATP = 2-(N(omega)-L-arginino)succinate + AMP + diphosphate + H(+)</text>
        <dbReference type="Rhea" id="RHEA:10932"/>
        <dbReference type="ChEBI" id="CHEBI:15378"/>
        <dbReference type="ChEBI" id="CHEBI:29991"/>
        <dbReference type="ChEBI" id="CHEBI:30616"/>
        <dbReference type="ChEBI" id="CHEBI:33019"/>
        <dbReference type="ChEBI" id="CHEBI:57472"/>
        <dbReference type="ChEBI" id="CHEBI:57743"/>
        <dbReference type="ChEBI" id="CHEBI:456215"/>
        <dbReference type="EC" id="6.3.4.5"/>
    </reaction>
</comment>
<comment type="pathway">
    <text evidence="1">Amino-acid biosynthesis; L-arginine biosynthesis; L-arginine from L-ornithine and carbamoyl phosphate: step 2/3.</text>
</comment>
<comment type="subunit">
    <text evidence="1">Homotetramer.</text>
</comment>
<comment type="subcellular location">
    <subcellularLocation>
        <location evidence="1">Cytoplasm</location>
    </subcellularLocation>
</comment>
<comment type="similarity">
    <text evidence="1">Belongs to the argininosuccinate synthase family. Type 2 subfamily.</text>
</comment>
<proteinExistence type="inferred from homology"/>
<sequence>MTTILKHLPAGQRIGIAFSGGLDTSAALLWMRQKGAVPYAYTANLGQPDEDDYDAIPRRAMEYGAENARLIDCRKQLVAEGIAAIQCGAFHNTTGGLTYFNTTPLGRAVTGTMLVAAMKEDGVNIWGDGSTYKGNDIERFYRYGLLTNAELQIYKPWLDTDFIDELGGRHEMSEFMIACGFDYKMSVEKAYSTDSNMLGATHEAKDLEFLNSSVKIVNPIMGVKFWDESVKIPAEEVTVRFEQGHPVALNGKTFSDDVEMMLEANRIGGRHGLGMSDQIENRIIEAKSRGIYEAPGMALLHIAYERLLTGIHNEDTIEQYHSHGRQLGKLLYQGRWFDSQALMLRDGLQRWVASQITGEVTLELRRGNDYSILNTVSDNLTYKAERLTMEKGESVFSPDDRIGQLTMRNLDITDTREKLFGYAKAGLLTASSATGLPQVENLENKGK</sequence>
<name>ASSY_SALA4</name>
<keyword id="KW-0028">Amino-acid biosynthesis</keyword>
<keyword id="KW-0055">Arginine biosynthesis</keyword>
<keyword id="KW-0067">ATP-binding</keyword>
<keyword id="KW-0963">Cytoplasm</keyword>
<keyword id="KW-0436">Ligase</keyword>
<keyword id="KW-0547">Nucleotide-binding</keyword>